<sequence>MAALCLLLLLSLAEAIDLRVPELPVIGLLDKDVILPCWFTPSEGFTPKNLSVFWKLPNQQQDYGFVLGEDLQENQSPQYKDRISLFHEELSKGNMSVLLQQVRLTDEGIYTCFVNVQNSSSASVSLQVGAPFTKPTLHLEPSEALKPGDQVTVTCHTYDGYPEANILWQNGEGQNMTENITTSQVANEKGLFHVQSSLSVILETSDTYTCLVFNPVLQDVTHASLTVTGQHLSFPPLVLWVTVGLSICLLCLLVALACVCRKHLKQTCEEEQENAGNEEHEENGELKTAMQPLKVTSPGEDDDAECLE</sequence>
<gene>
    <name type="primary">cd276</name>
</gene>
<feature type="signal peptide" evidence="2">
    <location>
        <begin position="1"/>
        <end position="15"/>
    </location>
</feature>
<feature type="chain" id="PRO_0000045804" description="CD276 antigen homolog">
    <location>
        <begin position="16"/>
        <end position="308"/>
    </location>
</feature>
<feature type="topological domain" description="Extracellular" evidence="2">
    <location>
        <begin position="16"/>
        <end position="236"/>
    </location>
</feature>
<feature type="transmembrane region" description="Helical" evidence="2">
    <location>
        <begin position="237"/>
        <end position="257"/>
    </location>
</feature>
<feature type="topological domain" description="Cytoplasmic" evidence="2">
    <location>
        <begin position="258"/>
        <end position="308"/>
    </location>
</feature>
<feature type="domain" description="Ig-like V-type">
    <location>
        <begin position="21"/>
        <end position="125"/>
    </location>
</feature>
<feature type="domain" description="Ig-like C2-type">
    <location>
        <begin position="135"/>
        <end position="228"/>
    </location>
</feature>
<feature type="region of interest" description="Disordered" evidence="4">
    <location>
        <begin position="270"/>
        <end position="308"/>
    </location>
</feature>
<feature type="compositionally biased region" description="Acidic residues" evidence="4">
    <location>
        <begin position="299"/>
        <end position="308"/>
    </location>
</feature>
<feature type="disulfide bond" evidence="3">
    <location>
        <begin position="37"/>
        <end position="112"/>
    </location>
</feature>
<feature type="disulfide bond" evidence="3">
    <location>
        <begin position="155"/>
        <end position="210"/>
    </location>
</feature>
<reference key="1">
    <citation type="submission" date="2004-08" db="EMBL/GenBank/DDBJ databases">
        <authorList>
            <consortium name="NIH - Xenopus Gene Collection (XGC) project"/>
        </authorList>
    </citation>
    <scope>NUCLEOTIDE SEQUENCE [LARGE SCALE MRNA]</scope>
    <source>
        <tissue>Eye</tissue>
    </source>
</reference>
<comment type="function">
    <text evidence="1">Modulates immune responses.</text>
</comment>
<comment type="subcellular location">
    <subcellularLocation>
        <location evidence="5">Membrane</location>
        <topology evidence="5">Single-pass type I membrane protein</topology>
    </subcellularLocation>
</comment>
<comment type="similarity">
    <text evidence="5">Belongs to the immunoglobulin superfamily. BTN/MOG family.</text>
</comment>
<keyword id="KW-1015">Disulfide bond</keyword>
<keyword id="KW-0393">Immunoglobulin domain</keyword>
<keyword id="KW-0472">Membrane</keyword>
<keyword id="KW-1185">Reference proteome</keyword>
<keyword id="KW-0677">Repeat</keyword>
<keyword id="KW-0732">Signal</keyword>
<keyword id="KW-0812">Transmembrane</keyword>
<keyword id="KW-1133">Transmembrane helix</keyword>
<accession>Q68EV1</accession>
<evidence type="ECO:0000250" key="1"/>
<evidence type="ECO:0000255" key="2"/>
<evidence type="ECO:0000255" key="3">
    <source>
        <dbReference type="PROSITE-ProRule" id="PRU00114"/>
    </source>
</evidence>
<evidence type="ECO:0000256" key="4">
    <source>
        <dbReference type="SAM" id="MobiDB-lite"/>
    </source>
</evidence>
<evidence type="ECO:0000305" key="5"/>
<protein>
    <recommendedName>
        <fullName>CD276 antigen homolog</fullName>
    </recommendedName>
    <cdAntigenName>CD276</cdAntigenName>
</protein>
<organism>
    <name type="scientific">Xenopus laevis</name>
    <name type="common">African clawed frog</name>
    <dbReference type="NCBI Taxonomy" id="8355"/>
    <lineage>
        <taxon>Eukaryota</taxon>
        <taxon>Metazoa</taxon>
        <taxon>Chordata</taxon>
        <taxon>Craniata</taxon>
        <taxon>Vertebrata</taxon>
        <taxon>Euteleostomi</taxon>
        <taxon>Amphibia</taxon>
        <taxon>Batrachia</taxon>
        <taxon>Anura</taxon>
        <taxon>Pipoidea</taxon>
        <taxon>Pipidae</taxon>
        <taxon>Xenopodinae</taxon>
        <taxon>Xenopus</taxon>
        <taxon>Xenopus</taxon>
    </lineage>
</organism>
<proteinExistence type="evidence at transcript level"/>
<name>CD276_XENLA</name>
<dbReference type="EMBL" id="BC080099">
    <property type="protein sequence ID" value="AAH80099.1"/>
    <property type="molecule type" value="mRNA"/>
</dbReference>
<dbReference type="RefSeq" id="NP_001087555.1">
    <property type="nucleotide sequence ID" value="NM_001094086.1"/>
</dbReference>
<dbReference type="SMR" id="Q68EV1"/>
<dbReference type="MEROPS" id="I43.001"/>
<dbReference type="DNASU" id="447379"/>
<dbReference type="GeneID" id="447379"/>
<dbReference type="KEGG" id="xla:447379"/>
<dbReference type="AGR" id="Xenbase:XB-GENE-921543"/>
<dbReference type="CTD" id="447379"/>
<dbReference type="Xenbase" id="XB-GENE-921543">
    <property type="gene designation" value="cd276.S"/>
</dbReference>
<dbReference type="OrthoDB" id="8897154at2759"/>
<dbReference type="Proteomes" id="UP000186698">
    <property type="component" value="Chromosome 3S"/>
</dbReference>
<dbReference type="Bgee" id="447379">
    <property type="expression patterns" value="Expressed in blastula and 19 other cell types or tissues"/>
</dbReference>
<dbReference type="GO" id="GO:0009897">
    <property type="term" value="C:external side of plasma membrane"/>
    <property type="evidence" value="ECO:0000318"/>
    <property type="project" value="GO_Central"/>
</dbReference>
<dbReference type="GO" id="GO:0005102">
    <property type="term" value="F:signaling receptor binding"/>
    <property type="evidence" value="ECO:0000318"/>
    <property type="project" value="GO_Central"/>
</dbReference>
<dbReference type="GO" id="GO:0001817">
    <property type="term" value="P:regulation of cytokine production"/>
    <property type="evidence" value="ECO:0000318"/>
    <property type="project" value="GO_Central"/>
</dbReference>
<dbReference type="GO" id="GO:0050852">
    <property type="term" value="P:T cell receptor signaling pathway"/>
    <property type="evidence" value="ECO:0000318"/>
    <property type="project" value="GO_Central"/>
</dbReference>
<dbReference type="CDD" id="cd20934">
    <property type="entry name" value="IgV_B7-H3"/>
    <property type="match status" value="1"/>
</dbReference>
<dbReference type="FunFam" id="2.60.40.10:FF:000088">
    <property type="entry name" value="Butyrophilin subfamily 1 member A1"/>
    <property type="match status" value="1"/>
</dbReference>
<dbReference type="FunFam" id="2.60.40.10:FF:002868">
    <property type="entry name" value="CD276 molecule"/>
    <property type="match status" value="1"/>
</dbReference>
<dbReference type="Gene3D" id="2.60.40.10">
    <property type="entry name" value="Immunoglobulins"/>
    <property type="match status" value="2"/>
</dbReference>
<dbReference type="InterPro" id="IPR053896">
    <property type="entry name" value="BTN3A2-like_Ig-C"/>
</dbReference>
<dbReference type="InterPro" id="IPR047318">
    <property type="entry name" value="CD276_IgV"/>
</dbReference>
<dbReference type="InterPro" id="IPR007110">
    <property type="entry name" value="Ig-like_dom"/>
</dbReference>
<dbReference type="InterPro" id="IPR036179">
    <property type="entry name" value="Ig-like_dom_sf"/>
</dbReference>
<dbReference type="InterPro" id="IPR013783">
    <property type="entry name" value="Ig-like_fold"/>
</dbReference>
<dbReference type="InterPro" id="IPR003597">
    <property type="entry name" value="Ig_C1-set"/>
</dbReference>
<dbReference type="InterPro" id="IPR003599">
    <property type="entry name" value="Ig_sub"/>
</dbReference>
<dbReference type="InterPro" id="IPR003598">
    <property type="entry name" value="Ig_sub2"/>
</dbReference>
<dbReference type="InterPro" id="IPR013106">
    <property type="entry name" value="Ig_V-set"/>
</dbReference>
<dbReference type="InterPro" id="IPR050504">
    <property type="entry name" value="IgSF_BTN/MOG"/>
</dbReference>
<dbReference type="PANTHER" id="PTHR24100">
    <property type="entry name" value="BUTYROPHILIN"/>
    <property type="match status" value="1"/>
</dbReference>
<dbReference type="PANTHER" id="PTHR24100:SF155">
    <property type="entry name" value="CD276 ANTIGEN"/>
    <property type="match status" value="1"/>
</dbReference>
<dbReference type="Pfam" id="PF22705">
    <property type="entry name" value="C2-set_3"/>
    <property type="match status" value="1"/>
</dbReference>
<dbReference type="Pfam" id="PF07686">
    <property type="entry name" value="V-set"/>
    <property type="match status" value="1"/>
</dbReference>
<dbReference type="SMART" id="SM00409">
    <property type="entry name" value="IG"/>
    <property type="match status" value="2"/>
</dbReference>
<dbReference type="SMART" id="SM00407">
    <property type="entry name" value="IGc1"/>
    <property type="match status" value="1"/>
</dbReference>
<dbReference type="SMART" id="SM00408">
    <property type="entry name" value="IGc2"/>
    <property type="match status" value="2"/>
</dbReference>
<dbReference type="SUPFAM" id="SSF48726">
    <property type="entry name" value="Immunoglobulin"/>
    <property type="match status" value="2"/>
</dbReference>
<dbReference type="PROSITE" id="PS50835">
    <property type="entry name" value="IG_LIKE"/>
    <property type="match status" value="2"/>
</dbReference>